<evidence type="ECO:0000255" key="1">
    <source>
        <dbReference type="HAMAP-Rule" id="MF_00210"/>
    </source>
</evidence>
<feature type="chain" id="PRO_1000099713" description="3-phosphoshikimate 1-carboxyvinyltransferase">
    <location>
        <begin position="1"/>
        <end position="440"/>
    </location>
</feature>
<feature type="active site" description="Proton acceptor" evidence="1">
    <location>
        <position position="315"/>
    </location>
</feature>
<feature type="binding site" evidence="1">
    <location>
        <position position="19"/>
    </location>
    <ligand>
        <name>3-phosphoshikimate</name>
        <dbReference type="ChEBI" id="CHEBI:145989"/>
    </ligand>
</feature>
<feature type="binding site" evidence="1">
    <location>
        <position position="19"/>
    </location>
    <ligand>
        <name>phosphoenolpyruvate</name>
        <dbReference type="ChEBI" id="CHEBI:58702"/>
    </ligand>
</feature>
<feature type="binding site" evidence="1">
    <location>
        <position position="20"/>
    </location>
    <ligand>
        <name>3-phosphoshikimate</name>
        <dbReference type="ChEBI" id="CHEBI:145989"/>
    </ligand>
</feature>
<feature type="binding site" evidence="1">
    <location>
        <position position="24"/>
    </location>
    <ligand>
        <name>3-phosphoshikimate</name>
        <dbReference type="ChEBI" id="CHEBI:145989"/>
    </ligand>
</feature>
<feature type="binding site" evidence="1">
    <location>
        <position position="92"/>
    </location>
    <ligand>
        <name>phosphoenolpyruvate</name>
        <dbReference type="ChEBI" id="CHEBI:58702"/>
    </ligand>
</feature>
<feature type="binding site" evidence="1">
    <location>
        <position position="121"/>
    </location>
    <ligand>
        <name>phosphoenolpyruvate</name>
        <dbReference type="ChEBI" id="CHEBI:58702"/>
    </ligand>
</feature>
<feature type="binding site" evidence="1">
    <location>
        <position position="166"/>
    </location>
    <ligand>
        <name>3-phosphoshikimate</name>
        <dbReference type="ChEBI" id="CHEBI:145989"/>
    </ligand>
</feature>
<feature type="binding site" evidence="1">
    <location>
        <position position="168"/>
    </location>
    <ligand>
        <name>3-phosphoshikimate</name>
        <dbReference type="ChEBI" id="CHEBI:145989"/>
    </ligand>
</feature>
<feature type="binding site" evidence="1">
    <location>
        <position position="168"/>
    </location>
    <ligand>
        <name>phosphoenolpyruvate</name>
        <dbReference type="ChEBI" id="CHEBI:58702"/>
    </ligand>
</feature>
<feature type="binding site" evidence="1">
    <location>
        <position position="315"/>
    </location>
    <ligand>
        <name>3-phosphoshikimate</name>
        <dbReference type="ChEBI" id="CHEBI:145989"/>
    </ligand>
</feature>
<feature type="binding site" evidence="1">
    <location>
        <position position="342"/>
    </location>
    <ligand>
        <name>3-phosphoshikimate</name>
        <dbReference type="ChEBI" id="CHEBI:145989"/>
    </ligand>
</feature>
<feature type="binding site" evidence="1">
    <location>
        <position position="346"/>
    </location>
    <ligand>
        <name>phosphoenolpyruvate</name>
        <dbReference type="ChEBI" id="CHEBI:58702"/>
    </ligand>
</feature>
<feature type="binding site" evidence="1">
    <location>
        <position position="399"/>
    </location>
    <ligand>
        <name>phosphoenolpyruvate</name>
        <dbReference type="ChEBI" id="CHEBI:58702"/>
    </ligand>
</feature>
<accession>Q04ZI3</accession>
<reference key="1">
    <citation type="journal article" date="2006" name="Proc. Natl. Acad. Sci. U.S.A.">
        <title>Genome reduction in Leptospira borgpetersenii reflects limited transmission potential.</title>
        <authorList>
            <person name="Bulach D.M."/>
            <person name="Zuerner R.L."/>
            <person name="Wilson P."/>
            <person name="Seemann T."/>
            <person name="McGrath A."/>
            <person name="Cullen P.A."/>
            <person name="Davis J."/>
            <person name="Johnson M."/>
            <person name="Kuczek E."/>
            <person name="Alt D.P."/>
            <person name="Peterson-Burch B."/>
            <person name="Coppel R.L."/>
            <person name="Rood J.I."/>
            <person name="Davies J.K."/>
            <person name="Adler B."/>
        </authorList>
    </citation>
    <scope>NUCLEOTIDE SEQUENCE [LARGE SCALE GENOMIC DNA]</scope>
    <source>
        <strain>L550</strain>
    </source>
</reference>
<dbReference type="EC" id="2.5.1.19" evidence="1"/>
<dbReference type="EMBL" id="CP000348">
    <property type="protein sequence ID" value="ABJ79512.1"/>
    <property type="molecule type" value="Genomic_DNA"/>
</dbReference>
<dbReference type="RefSeq" id="WP_011670563.1">
    <property type="nucleotide sequence ID" value="NC_008508.1"/>
</dbReference>
<dbReference type="SMR" id="Q04ZI3"/>
<dbReference type="KEGG" id="lbl:LBL_2099"/>
<dbReference type="HOGENOM" id="CLU_024321_0_1_12"/>
<dbReference type="UniPathway" id="UPA00053">
    <property type="reaction ID" value="UER00089"/>
</dbReference>
<dbReference type="GO" id="GO:0005737">
    <property type="term" value="C:cytoplasm"/>
    <property type="evidence" value="ECO:0007669"/>
    <property type="project" value="UniProtKB-SubCell"/>
</dbReference>
<dbReference type="GO" id="GO:0003866">
    <property type="term" value="F:3-phosphoshikimate 1-carboxyvinyltransferase activity"/>
    <property type="evidence" value="ECO:0007669"/>
    <property type="project" value="UniProtKB-UniRule"/>
</dbReference>
<dbReference type="GO" id="GO:0008652">
    <property type="term" value="P:amino acid biosynthetic process"/>
    <property type="evidence" value="ECO:0007669"/>
    <property type="project" value="UniProtKB-KW"/>
</dbReference>
<dbReference type="GO" id="GO:0009073">
    <property type="term" value="P:aromatic amino acid family biosynthetic process"/>
    <property type="evidence" value="ECO:0007669"/>
    <property type="project" value="UniProtKB-KW"/>
</dbReference>
<dbReference type="GO" id="GO:0009423">
    <property type="term" value="P:chorismate biosynthetic process"/>
    <property type="evidence" value="ECO:0007669"/>
    <property type="project" value="UniProtKB-UniRule"/>
</dbReference>
<dbReference type="CDD" id="cd01556">
    <property type="entry name" value="EPSP_synthase"/>
    <property type="match status" value="1"/>
</dbReference>
<dbReference type="FunFam" id="3.65.10.10:FF:000005">
    <property type="entry name" value="3-phosphoshikimate 1-carboxyvinyltransferase"/>
    <property type="match status" value="1"/>
</dbReference>
<dbReference type="Gene3D" id="3.65.10.10">
    <property type="entry name" value="Enolpyruvate transferase domain"/>
    <property type="match status" value="2"/>
</dbReference>
<dbReference type="HAMAP" id="MF_00210">
    <property type="entry name" value="EPSP_synth"/>
    <property type="match status" value="1"/>
</dbReference>
<dbReference type="InterPro" id="IPR001986">
    <property type="entry name" value="Enolpyruvate_Tfrase_dom"/>
</dbReference>
<dbReference type="InterPro" id="IPR036968">
    <property type="entry name" value="Enolpyruvate_Tfrase_sf"/>
</dbReference>
<dbReference type="InterPro" id="IPR006264">
    <property type="entry name" value="EPSP_synthase"/>
</dbReference>
<dbReference type="InterPro" id="IPR023193">
    <property type="entry name" value="EPSP_synthase_CS"/>
</dbReference>
<dbReference type="InterPro" id="IPR013792">
    <property type="entry name" value="RNA3'P_cycl/enolpyr_Trfase_a/b"/>
</dbReference>
<dbReference type="NCBIfam" id="TIGR01356">
    <property type="entry name" value="aroA"/>
    <property type="match status" value="1"/>
</dbReference>
<dbReference type="PANTHER" id="PTHR21090">
    <property type="entry name" value="AROM/DEHYDROQUINATE SYNTHASE"/>
    <property type="match status" value="1"/>
</dbReference>
<dbReference type="PANTHER" id="PTHR21090:SF5">
    <property type="entry name" value="PENTAFUNCTIONAL AROM POLYPEPTIDE"/>
    <property type="match status" value="1"/>
</dbReference>
<dbReference type="Pfam" id="PF00275">
    <property type="entry name" value="EPSP_synthase"/>
    <property type="match status" value="1"/>
</dbReference>
<dbReference type="PIRSF" id="PIRSF000505">
    <property type="entry name" value="EPSPS"/>
    <property type="match status" value="1"/>
</dbReference>
<dbReference type="SUPFAM" id="SSF55205">
    <property type="entry name" value="EPT/RTPC-like"/>
    <property type="match status" value="1"/>
</dbReference>
<dbReference type="PROSITE" id="PS00885">
    <property type="entry name" value="EPSP_SYNTHASE_2"/>
    <property type="match status" value="1"/>
</dbReference>
<keyword id="KW-0028">Amino-acid biosynthesis</keyword>
<keyword id="KW-0057">Aromatic amino acid biosynthesis</keyword>
<keyword id="KW-0963">Cytoplasm</keyword>
<keyword id="KW-0808">Transferase</keyword>
<organism>
    <name type="scientific">Leptospira borgpetersenii serovar Hardjo-bovis (strain L550)</name>
    <dbReference type="NCBI Taxonomy" id="355276"/>
    <lineage>
        <taxon>Bacteria</taxon>
        <taxon>Pseudomonadati</taxon>
        <taxon>Spirochaetota</taxon>
        <taxon>Spirochaetia</taxon>
        <taxon>Leptospirales</taxon>
        <taxon>Leptospiraceae</taxon>
        <taxon>Leptospira</taxon>
    </lineage>
</organism>
<comment type="function">
    <text evidence="1">Catalyzes the transfer of the enolpyruvyl moiety of phosphoenolpyruvate (PEP) to the 5-hydroxyl of shikimate-3-phosphate (S3P) to produce enolpyruvyl shikimate-3-phosphate and inorganic phosphate.</text>
</comment>
<comment type="catalytic activity">
    <reaction evidence="1">
        <text>3-phosphoshikimate + phosphoenolpyruvate = 5-O-(1-carboxyvinyl)-3-phosphoshikimate + phosphate</text>
        <dbReference type="Rhea" id="RHEA:21256"/>
        <dbReference type="ChEBI" id="CHEBI:43474"/>
        <dbReference type="ChEBI" id="CHEBI:57701"/>
        <dbReference type="ChEBI" id="CHEBI:58702"/>
        <dbReference type="ChEBI" id="CHEBI:145989"/>
        <dbReference type="EC" id="2.5.1.19"/>
    </reaction>
    <physiologicalReaction direction="left-to-right" evidence="1">
        <dbReference type="Rhea" id="RHEA:21257"/>
    </physiologicalReaction>
</comment>
<comment type="pathway">
    <text evidence="1">Metabolic intermediate biosynthesis; chorismate biosynthesis; chorismate from D-erythrose 4-phosphate and phosphoenolpyruvate: step 6/7.</text>
</comment>
<comment type="subunit">
    <text evidence="1">Monomer.</text>
</comment>
<comment type="subcellular location">
    <subcellularLocation>
        <location evidence="1">Cytoplasm</location>
    </subcellularLocation>
</comment>
<comment type="similarity">
    <text evidence="1">Belongs to the EPSP synthase family.</text>
</comment>
<name>AROA_LEPBL</name>
<protein>
    <recommendedName>
        <fullName evidence="1">3-phosphoshikimate 1-carboxyvinyltransferase</fullName>
        <ecNumber evidence="1">2.5.1.19</ecNumber>
    </recommendedName>
    <alternativeName>
        <fullName evidence="1">5-enolpyruvylshikimate-3-phosphate synthase</fullName>
        <shortName evidence="1">EPSP synthase</shortName>
        <shortName evidence="1">EPSPS</shortName>
    </alternativeName>
</protein>
<sequence length="440" mass="48176">MILKNVKLKSGEITVPGDKSLSHRSVLFAALCKGKSKVTGFLEAEDPLNTMSAFTKLGLKVRKVKPGEYEFESPGKRGFISPNVDLDFGNAGTGIRLSAGLLCGLPGVNAVLTGDGSLKKRPMGRIIKPLTAMGASILGLGEKETAPLKVEGKKLKSFRYESPIASAQIKSCLMLAAIASETDLEYSENILSRDHTENMFRFLGNKIEQISPFHFKIEPPYVLNGGEFKVPGDISSAAFFLVLGVLAKEGNLLVRNIGLNPARIGILKALELMGAKIEIRNQRMECGEPVGDLKTYPSILNKTNIPKSLIPSIIDEIPILSVAGLFAKGGFEIRHAEELRAKESDRIHTMVSNFRALGIEVEEYPDGYAFDGTSPQSLEIWKFLASGKKISILSHMDHRITMSFLIFKTLSGFNLHIDETSWIETSFPGFEKLLESCLDE</sequence>
<gene>
    <name evidence="1" type="primary">aroA</name>
    <name type="ordered locus">LBL_2099</name>
</gene>
<proteinExistence type="inferred from homology"/>